<name>CSRA_SHIF8</name>
<proteinExistence type="inferred from homology"/>
<dbReference type="EMBL" id="CP000266">
    <property type="protein sequence ID" value="ABF04893.1"/>
    <property type="molecule type" value="Genomic_DNA"/>
</dbReference>
<dbReference type="RefSeq" id="WP_000906486.1">
    <property type="nucleotide sequence ID" value="NC_008258.1"/>
</dbReference>
<dbReference type="SMR" id="Q0T1C2"/>
<dbReference type="GeneID" id="98389839"/>
<dbReference type="KEGG" id="sfv:SFV_2809"/>
<dbReference type="HOGENOM" id="CLU_164837_2_1_6"/>
<dbReference type="Proteomes" id="UP000000659">
    <property type="component" value="Chromosome"/>
</dbReference>
<dbReference type="GO" id="GO:0005829">
    <property type="term" value="C:cytosol"/>
    <property type="evidence" value="ECO:0007669"/>
    <property type="project" value="TreeGrafter"/>
</dbReference>
<dbReference type="GO" id="GO:0048027">
    <property type="term" value="F:mRNA 5'-UTR binding"/>
    <property type="evidence" value="ECO:0007669"/>
    <property type="project" value="UniProtKB-UniRule"/>
</dbReference>
<dbReference type="GO" id="GO:0006402">
    <property type="term" value="P:mRNA catabolic process"/>
    <property type="evidence" value="ECO:0007669"/>
    <property type="project" value="InterPro"/>
</dbReference>
<dbReference type="GO" id="GO:0045947">
    <property type="term" value="P:negative regulation of translational initiation"/>
    <property type="evidence" value="ECO:0007669"/>
    <property type="project" value="UniProtKB-UniRule"/>
</dbReference>
<dbReference type="GO" id="GO:0045948">
    <property type="term" value="P:positive regulation of translational initiation"/>
    <property type="evidence" value="ECO:0007669"/>
    <property type="project" value="UniProtKB-UniRule"/>
</dbReference>
<dbReference type="GO" id="GO:0006109">
    <property type="term" value="P:regulation of carbohydrate metabolic process"/>
    <property type="evidence" value="ECO:0007669"/>
    <property type="project" value="UniProtKB-UniRule"/>
</dbReference>
<dbReference type="FunFam" id="2.60.40.4380:FF:000001">
    <property type="entry name" value="Translational regulator CsrA"/>
    <property type="match status" value="1"/>
</dbReference>
<dbReference type="Gene3D" id="2.60.40.4380">
    <property type="entry name" value="Translational regulator CsrA"/>
    <property type="match status" value="1"/>
</dbReference>
<dbReference type="HAMAP" id="MF_00167">
    <property type="entry name" value="CsrA"/>
    <property type="match status" value="1"/>
</dbReference>
<dbReference type="InterPro" id="IPR003751">
    <property type="entry name" value="CsrA"/>
</dbReference>
<dbReference type="InterPro" id="IPR036107">
    <property type="entry name" value="CsrA_sf"/>
</dbReference>
<dbReference type="NCBIfam" id="TIGR00202">
    <property type="entry name" value="csrA"/>
    <property type="match status" value="1"/>
</dbReference>
<dbReference type="NCBIfam" id="NF002469">
    <property type="entry name" value="PRK01712.1"/>
    <property type="match status" value="1"/>
</dbReference>
<dbReference type="PANTHER" id="PTHR34984">
    <property type="entry name" value="CARBON STORAGE REGULATOR"/>
    <property type="match status" value="1"/>
</dbReference>
<dbReference type="PANTHER" id="PTHR34984:SF1">
    <property type="entry name" value="CARBON STORAGE REGULATOR"/>
    <property type="match status" value="1"/>
</dbReference>
<dbReference type="Pfam" id="PF02599">
    <property type="entry name" value="CsrA"/>
    <property type="match status" value="1"/>
</dbReference>
<dbReference type="SUPFAM" id="SSF117130">
    <property type="entry name" value="CsrA-like"/>
    <property type="match status" value="1"/>
</dbReference>
<keyword id="KW-0010">Activator</keyword>
<keyword id="KW-0963">Cytoplasm</keyword>
<keyword id="KW-0678">Repressor</keyword>
<keyword id="KW-0694">RNA-binding</keyword>
<keyword id="KW-0810">Translation regulation</keyword>
<comment type="function">
    <text evidence="1">A key translational regulator that binds mRNA to regulate translation initiation and/or mRNA stability. Mediates global changes in gene expression, shifting from rapid growth to stress survival by linking envelope stress, the stringent response and the catabolite repression systems. Usually binds in the 5'-UTR; binding at or near the Shine-Dalgarno sequence prevents ribosome-binding, repressing translation, binding elsewhere in the 5'-UTR can activate translation and/or stabilize the mRNA. Its function is antagonized by small RNA(s).</text>
</comment>
<comment type="subunit">
    <text evidence="1">Homodimer; the beta-strands of each monomer intercalate to form a hydrophobic core, while the alpha-helices form wings that extend away from the core.</text>
</comment>
<comment type="subcellular location">
    <subcellularLocation>
        <location evidence="1">Cytoplasm</location>
    </subcellularLocation>
</comment>
<comment type="similarity">
    <text evidence="1">Belongs to the CsrA/RsmA family.</text>
</comment>
<sequence>MLILTRRVGETLMIGDEVTVTVLGVKGNQVRIGVNAPKEVSVHREEIYQRIQAEKSQQSSY</sequence>
<feature type="chain" id="PRO_1000023428" description="Translational regulator CsrA">
    <location>
        <begin position="1"/>
        <end position="61"/>
    </location>
</feature>
<reference key="1">
    <citation type="journal article" date="2006" name="BMC Genomics">
        <title>Complete genome sequence of Shigella flexneri 5b and comparison with Shigella flexneri 2a.</title>
        <authorList>
            <person name="Nie H."/>
            <person name="Yang F."/>
            <person name="Zhang X."/>
            <person name="Yang J."/>
            <person name="Chen L."/>
            <person name="Wang J."/>
            <person name="Xiong Z."/>
            <person name="Peng J."/>
            <person name="Sun L."/>
            <person name="Dong J."/>
            <person name="Xue Y."/>
            <person name="Xu X."/>
            <person name="Chen S."/>
            <person name="Yao Z."/>
            <person name="Shen Y."/>
            <person name="Jin Q."/>
        </authorList>
    </citation>
    <scope>NUCLEOTIDE SEQUENCE [LARGE SCALE GENOMIC DNA]</scope>
    <source>
        <strain>8401</strain>
    </source>
</reference>
<gene>
    <name evidence="1" type="primary">csrA</name>
    <name type="ordered locus">SFV_2809</name>
</gene>
<accession>Q0T1C2</accession>
<organism>
    <name type="scientific">Shigella flexneri serotype 5b (strain 8401)</name>
    <dbReference type="NCBI Taxonomy" id="373384"/>
    <lineage>
        <taxon>Bacteria</taxon>
        <taxon>Pseudomonadati</taxon>
        <taxon>Pseudomonadota</taxon>
        <taxon>Gammaproteobacteria</taxon>
        <taxon>Enterobacterales</taxon>
        <taxon>Enterobacteriaceae</taxon>
        <taxon>Shigella</taxon>
    </lineage>
</organism>
<evidence type="ECO:0000255" key="1">
    <source>
        <dbReference type="HAMAP-Rule" id="MF_00167"/>
    </source>
</evidence>
<protein>
    <recommendedName>
        <fullName evidence="1">Translational regulator CsrA</fullName>
    </recommendedName>
    <alternativeName>
        <fullName evidence="1">Carbon storage regulator</fullName>
    </alternativeName>
</protein>